<name>CYB_DIDVI</name>
<gene>
    <name type="primary">MT-CYB</name>
    <name type="synonym">COB</name>
    <name type="synonym">CYTB</name>
    <name type="synonym">MTCYB</name>
</gene>
<sequence length="382" mass="43041">MTNIRKTHPLMKIINDSFIDLPTPSNISAWWNFGSLLGVCLIIQILTGLFLAMHYTSDTLTAFSSVAHICRDVNYGWLIRNIHANGASMFFMCLFLHVGRGIYYGSYLYKETWNIGVILLLTVMATAFVGYVLPWGQMSFWGATVITNLLSAIPYIGSTLVEWIWGGFSVDKATLTRFFAFHFILPFIILAMVVVHLLFLHETGSSNPTGLDPNSDKIPFHPYYTMKDILGLFLMIIILLSLAMFSPDLLGDPDNFTPANPLNTPPHIKPEWYFLFAYAILRSIPNKLGGVLALLASILVLLIIPMLHTSTQRSMAFRPISQTLFWMLTANLIILTWIGGQPVEQPYITIGQWASISYFTIIIILMPLAGMLENYMLKPKFP</sequence>
<organism>
    <name type="scientific">Didelphis virginiana</name>
    <name type="common">North American opossum</name>
    <name type="synonym">Didelphis marsupialis virginiana</name>
    <dbReference type="NCBI Taxonomy" id="9267"/>
    <lineage>
        <taxon>Eukaryota</taxon>
        <taxon>Metazoa</taxon>
        <taxon>Chordata</taxon>
        <taxon>Craniata</taxon>
        <taxon>Vertebrata</taxon>
        <taxon>Euteleostomi</taxon>
        <taxon>Mammalia</taxon>
        <taxon>Metatheria</taxon>
        <taxon>Didelphimorphia</taxon>
        <taxon>Didelphidae</taxon>
        <taxon>Didelphis</taxon>
    </lineage>
</organism>
<feature type="chain" id="PRO_0000060885" description="Cytochrome b">
    <location>
        <begin position="1"/>
        <end position="382"/>
    </location>
</feature>
<feature type="transmembrane region" description="Helical" evidence="2">
    <location>
        <begin position="33"/>
        <end position="53"/>
    </location>
</feature>
<feature type="transmembrane region" description="Helical" evidence="2">
    <location>
        <begin position="77"/>
        <end position="98"/>
    </location>
</feature>
<feature type="transmembrane region" description="Helical" evidence="2">
    <location>
        <begin position="113"/>
        <end position="133"/>
    </location>
</feature>
<feature type="transmembrane region" description="Helical" evidence="2">
    <location>
        <begin position="178"/>
        <end position="198"/>
    </location>
</feature>
<feature type="transmembrane region" description="Helical" evidence="2">
    <location>
        <begin position="226"/>
        <end position="246"/>
    </location>
</feature>
<feature type="transmembrane region" description="Helical" evidence="2">
    <location>
        <begin position="288"/>
        <end position="308"/>
    </location>
</feature>
<feature type="transmembrane region" description="Helical" evidence="2">
    <location>
        <begin position="320"/>
        <end position="340"/>
    </location>
</feature>
<feature type="transmembrane region" description="Helical" evidence="2">
    <location>
        <begin position="347"/>
        <end position="367"/>
    </location>
</feature>
<feature type="binding site" description="axial binding residue" evidence="2">
    <location>
        <position position="83"/>
    </location>
    <ligand>
        <name>heme b</name>
        <dbReference type="ChEBI" id="CHEBI:60344"/>
        <label>b562</label>
    </ligand>
    <ligandPart>
        <name>Fe</name>
        <dbReference type="ChEBI" id="CHEBI:18248"/>
    </ligandPart>
</feature>
<feature type="binding site" description="axial binding residue" evidence="2">
    <location>
        <position position="97"/>
    </location>
    <ligand>
        <name>heme b</name>
        <dbReference type="ChEBI" id="CHEBI:60344"/>
        <label>b566</label>
    </ligand>
    <ligandPart>
        <name>Fe</name>
        <dbReference type="ChEBI" id="CHEBI:18248"/>
    </ligandPart>
</feature>
<feature type="binding site" description="axial binding residue" evidence="2">
    <location>
        <position position="182"/>
    </location>
    <ligand>
        <name>heme b</name>
        <dbReference type="ChEBI" id="CHEBI:60344"/>
        <label>b562</label>
    </ligand>
    <ligandPart>
        <name>Fe</name>
        <dbReference type="ChEBI" id="CHEBI:18248"/>
    </ligandPart>
</feature>
<feature type="binding site" description="axial binding residue" evidence="2">
    <location>
        <position position="196"/>
    </location>
    <ligand>
        <name>heme b</name>
        <dbReference type="ChEBI" id="CHEBI:60344"/>
        <label>b566</label>
    </ligand>
    <ligandPart>
        <name>Fe</name>
        <dbReference type="ChEBI" id="CHEBI:18248"/>
    </ligandPart>
</feature>
<feature type="binding site" evidence="2">
    <location>
        <position position="201"/>
    </location>
    <ligand>
        <name>a ubiquinone</name>
        <dbReference type="ChEBI" id="CHEBI:16389"/>
    </ligand>
</feature>
<evidence type="ECO:0000250" key="1"/>
<evidence type="ECO:0000250" key="2">
    <source>
        <dbReference type="UniProtKB" id="P00157"/>
    </source>
</evidence>
<evidence type="ECO:0000255" key="3">
    <source>
        <dbReference type="PROSITE-ProRule" id="PRU00967"/>
    </source>
</evidence>
<evidence type="ECO:0000255" key="4">
    <source>
        <dbReference type="PROSITE-ProRule" id="PRU00968"/>
    </source>
</evidence>
<reference key="1">
    <citation type="journal article" date="1994" name="Genetics">
        <title>The marsupial mitochondrial genome and the evolution of placental mammals.</title>
        <authorList>
            <person name="Janke A."/>
            <person name="Feldmaier-Fuchs G."/>
            <person name="Thomas K."/>
            <person name="von Haeseler A."/>
            <person name="Paabo S."/>
        </authorList>
    </citation>
    <scope>NUCLEOTIDE SEQUENCE [GENOMIC DNA]</scope>
    <source>
        <tissue>Liver</tissue>
    </source>
</reference>
<protein>
    <recommendedName>
        <fullName>Cytochrome b</fullName>
    </recommendedName>
    <alternativeName>
        <fullName>Complex III subunit 3</fullName>
    </alternativeName>
    <alternativeName>
        <fullName>Complex III subunit III</fullName>
    </alternativeName>
    <alternativeName>
        <fullName>Cytochrome b-c1 complex subunit 3</fullName>
    </alternativeName>
    <alternativeName>
        <fullName>Ubiquinol-cytochrome-c reductase complex cytochrome b subunit</fullName>
    </alternativeName>
</protein>
<keyword id="KW-0249">Electron transport</keyword>
<keyword id="KW-0349">Heme</keyword>
<keyword id="KW-0408">Iron</keyword>
<keyword id="KW-0472">Membrane</keyword>
<keyword id="KW-0479">Metal-binding</keyword>
<keyword id="KW-0496">Mitochondrion</keyword>
<keyword id="KW-0999">Mitochondrion inner membrane</keyword>
<keyword id="KW-0679">Respiratory chain</keyword>
<keyword id="KW-0812">Transmembrane</keyword>
<keyword id="KW-1133">Transmembrane helix</keyword>
<keyword id="KW-0813">Transport</keyword>
<keyword id="KW-0830">Ubiquinone</keyword>
<geneLocation type="mitochondrion"/>
<dbReference type="EMBL" id="Z29573">
    <property type="protein sequence ID" value="CAA82689.1"/>
    <property type="molecule type" value="Genomic_DNA"/>
</dbReference>
<dbReference type="PIR" id="S47882">
    <property type="entry name" value="S47882"/>
</dbReference>
<dbReference type="RefSeq" id="NP_007107.1">
    <property type="nucleotide sequence ID" value="NC_001610.1"/>
</dbReference>
<dbReference type="SMR" id="P41303"/>
<dbReference type="GeneID" id="807786"/>
<dbReference type="CTD" id="4519"/>
<dbReference type="GO" id="GO:0005743">
    <property type="term" value="C:mitochondrial inner membrane"/>
    <property type="evidence" value="ECO:0007669"/>
    <property type="project" value="UniProtKB-SubCell"/>
</dbReference>
<dbReference type="GO" id="GO:0045275">
    <property type="term" value="C:respiratory chain complex III"/>
    <property type="evidence" value="ECO:0007669"/>
    <property type="project" value="InterPro"/>
</dbReference>
<dbReference type="GO" id="GO:0046872">
    <property type="term" value="F:metal ion binding"/>
    <property type="evidence" value="ECO:0007669"/>
    <property type="project" value="UniProtKB-KW"/>
</dbReference>
<dbReference type="GO" id="GO:0008121">
    <property type="term" value="F:ubiquinol-cytochrome-c reductase activity"/>
    <property type="evidence" value="ECO:0007669"/>
    <property type="project" value="InterPro"/>
</dbReference>
<dbReference type="GO" id="GO:0006122">
    <property type="term" value="P:mitochondrial electron transport, ubiquinol to cytochrome c"/>
    <property type="evidence" value="ECO:0007669"/>
    <property type="project" value="TreeGrafter"/>
</dbReference>
<dbReference type="CDD" id="cd00290">
    <property type="entry name" value="cytochrome_b_C"/>
    <property type="match status" value="1"/>
</dbReference>
<dbReference type="CDD" id="cd00284">
    <property type="entry name" value="Cytochrome_b_N"/>
    <property type="match status" value="1"/>
</dbReference>
<dbReference type="FunFam" id="1.20.810.10:FF:000002">
    <property type="entry name" value="Cytochrome b"/>
    <property type="match status" value="1"/>
</dbReference>
<dbReference type="Gene3D" id="1.20.810.10">
    <property type="entry name" value="Cytochrome Bc1 Complex, Chain C"/>
    <property type="match status" value="1"/>
</dbReference>
<dbReference type="InterPro" id="IPR005798">
    <property type="entry name" value="Cyt_b/b6_C"/>
</dbReference>
<dbReference type="InterPro" id="IPR036150">
    <property type="entry name" value="Cyt_b/b6_C_sf"/>
</dbReference>
<dbReference type="InterPro" id="IPR005797">
    <property type="entry name" value="Cyt_b/b6_N"/>
</dbReference>
<dbReference type="InterPro" id="IPR027387">
    <property type="entry name" value="Cytb/b6-like_sf"/>
</dbReference>
<dbReference type="InterPro" id="IPR030689">
    <property type="entry name" value="Cytochrome_b"/>
</dbReference>
<dbReference type="InterPro" id="IPR048260">
    <property type="entry name" value="Cytochrome_b_C_euk/bac"/>
</dbReference>
<dbReference type="InterPro" id="IPR048259">
    <property type="entry name" value="Cytochrome_b_N_euk/bac"/>
</dbReference>
<dbReference type="InterPro" id="IPR016174">
    <property type="entry name" value="Di-haem_cyt_TM"/>
</dbReference>
<dbReference type="PANTHER" id="PTHR19271">
    <property type="entry name" value="CYTOCHROME B"/>
    <property type="match status" value="1"/>
</dbReference>
<dbReference type="PANTHER" id="PTHR19271:SF16">
    <property type="entry name" value="CYTOCHROME B"/>
    <property type="match status" value="1"/>
</dbReference>
<dbReference type="Pfam" id="PF00032">
    <property type="entry name" value="Cytochrom_B_C"/>
    <property type="match status" value="1"/>
</dbReference>
<dbReference type="Pfam" id="PF00033">
    <property type="entry name" value="Cytochrome_B"/>
    <property type="match status" value="1"/>
</dbReference>
<dbReference type="PIRSF" id="PIRSF038885">
    <property type="entry name" value="COB"/>
    <property type="match status" value="1"/>
</dbReference>
<dbReference type="SUPFAM" id="SSF81648">
    <property type="entry name" value="a domain/subunit of cytochrome bc1 complex (Ubiquinol-cytochrome c reductase)"/>
    <property type="match status" value="1"/>
</dbReference>
<dbReference type="SUPFAM" id="SSF81342">
    <property type="entry name" value="Transmembrane di-heme cytochromes"/>
    <property type="match status" value="1"/>
</dbReference>
<dbReference type="PROSITE" id="PS51003">
    <property type="entry name" value="CYTB_CTER"/>
    <property type="match status" value="1"/>
</dbReference>
<dbReference type="PROSITE" id="PS51002">
    <property type="entry name" value="CYTB_NTER"/>
    <property type="match status" value="1"/>
</dbReference>
<proteinExistence type="inferred from homology"/>
<accession>P41303</accession>
<comment type="function">
    <text evidence="2">Component of the ubiquinol-cytochrome c reductase complex (complex III or cytochrome b-c1 complex) that is part of the mitochondrial respiratory chain. The b-c1 complex mediates electron transfer from ubiquinol to cytochrome c. Contributes to the generation of a proton gradient across the mitochondrial membrane that is then used for ATP synthesis.</text>
</comment>
<comment type="cofactor">
    <cofactor evidence="2">
        <name>heme b</name>
        <dbReference type="ChEBI" id="CHEBI:60344"/>
    </cofactor>
    <text evidence="2">Binds 2 heme b groups non-covalently.</text>
</comment>
<comment type="subunit">
    <text evidence="2">The cytochrome bc1 complex contains 11 subunits: 3 respiratory subunits (MT-CYB, CYC1 and UQCRFS1), 2 core proteins (UQCRC1 and UQCRC2) and 6 low-molecular weight proteins (UQCRH/QCR6, UQCRB/QCR7, UQCRQ/QCR8, UQCR10/QCR9, UQCR11/QCR10 and a cleavage product of UQCRFS1). This cytochrome bc1 complex then forms a dimer.</text>
</comment>
<comment type="subcellular location">
    <subcellularLocation>
        <location evidence="2">Mitochondrion inner membrane</location>
        <topology evidence="2">Multi-pass membrane protein</topology>
    </subcellularLocation>
</comment>
<comment type="miscellaneous">
    <text evidence="1">Heme 1 (or BL or b562) is low-potential and absorbs at about 562 nm, and heme 2 (or BH or b566) is high-potential and absorbs at about 566 nm.</text>
</comment>
<comment type="similarity">
    <text evidence="3 4">Belongs to the cytochrome b family.</text>
</comment>
<comment type="caution">
    <text evidence="2">The full-length protein contains only eight transmembrane helices, not nine as predicted by bioinformatics tools.</text>
</comment>